<comment type="function">
    <text evidence="9">Transcription factor; part of the gene cluster that mediates the biosynthesis of eupenifeldin, a bistropolone meroterpenoid that acts as an antitumor agent.</text>
</comment>
<comment type="subcellular location">
    <subcellularLocation>
        <location evidence="1">Nucleus</location>
    </subcellularLocation>
</comment>
<comment type="disruption phenotype">
    <text evidence="4">Abolishes the production of eupenifeldin.</text>
</comment>
<comment type="biotechnology">
    <text evidence="3 5 6">Eupenifeldin is a bistropolone-humulene meroterpenoid first discovered as an antitumor and anti-leukemia agent (PubMed:8360103). This metabolite also shows anthelmintic activity against the parasitic worm Hemonchus contortus, anti-malarial activity as well as antifungal activity (PubMed:18095654, Ref.4).</text>
</comment>
<comment type="sequence caution" evidence="8">
    <conflict type="erroneous initiation">
        <sequence resource="EMBL-CDS" id="QCO93113"/>
    </conflict>
    <text>Truncated N-terminus.</text>
</comment>
<name>EUPR_PHOSX</name>
<dbReference type="EMBL" id="MK400120">
    <property type="protein sequence ID" value="QCO93113.1"/>
    <property type="status" value="ALT_INIT"/>
    <property type="molecule type" value="Genomic_DNA"/>
</dbReference>
<dbReference type="GO" id="GO:0005634">
    <property type="term" value="C:nucleus"/>
    <property type="evidence" value="ECO:0007669"/>
    <property type="project" value="UniProtKB-SubCell"/>
</dbReference>
<dbReference type="GO" id="GO:0003677">
    <property type="term" value="F:DNA binding"/>
    <property type="evidence" value="ECO:0007669"/>
    <property type="project" value="UniProtKB-KW"/>
</dbReference>
<dbReference type="GO" id="GO:0000981">
    <property type="term" value="F:DNA-binding transcription factor activity, RNA polymerase II-specific"/>
    <property type="evidence" value="ECO:0007669"/>
    <property type="project" value="InterPro"/>
</dbReference>
<dbReference type="GO" id="GO:0008270">
    <property type="term" value="F:zinc ion binding"/>
    <property type="evidence" value="ECO:0007669"/>
    <property type="project" value="InterPro"/>
</dbReference>
<dbReference type="GO" id="GO:0006351">
    <property type="term" value="P:DNA-templated transcription"/>
    <property type="evidence" value="ECO:0007669"/>
    <property type="project" value="InterPro"/>
</dbReference>
<dbReference type="CDD" id="cd12148">
    <property type="entry name" value="fungal_TF_MHR"/>
    <property type="match status" value="1"/>
</dbReference>
<dbReference type="CDD" id="cd00067">
    <property type="entry name" value="GAL4"/>
    <property type="match status" value="1"/>
</dbReference>
<dbReference type="Gene3D" id="4.10.240.10">
    <property type="entry name" value="Zn(2)-C6 fungal-type DNA-binding domain"/>
    <property type="match status" value="1"/>
</dbReference>
<dbReference type="InterPro" id="IPR007219">
    <property type="entry name" value="Transcription_factor_dom_fun"/>
</dbReference>
<dbReference type="InterPro" id="IPR036864">
    <property type="entry name" value="Zn2-C6_fun-type_DNA-bd_sf"/>
</dbReference>
<dbReference type="InterPro" id="IPR001138">
    <property type="entry name" value="Zn2Cys6_DnaBD"/>
</dbReference>
<dbReference type="PANTHER" id="PTHR47840:SF1">
    <property type="entry name" value="ZN(II)2CYS6 TRANSCRIPTION FACTOR (EUROFUNG)"/>
    <property type="match status" value="1"/>
</dbReference>
<dbReference type="PANTHER" id="PTHR47840">
    <property type="entry name" value="ZN(II)2CYS6 TRANSCRIPTION FACTOR (EUROFUNG)-RELATED"/>
    <property type="match status" value="1"/>
</dbReference>
<dbReference type="Pfam" id="PF04082">
    <property type="entry name" value="Fungal_trans"/>
    <property type="match status" value="1"/>
</dbReference>
<dbReference type="Pfam" id="PF00172">
    <property type="entry name" value="Zn_clus"/>
    <property type="match status" value="1"/>
</dbReference>
<dbReference type="SMART" id="SM00906">
    <property type="entry name" value="Fungal_trans"/>
    <property type="match status" value="1"/>
</dbReference>
<dbReference type="SMART" id="SM00066">
    <property type="entry name" value="GAL4"/>
    <property type="match status" value="1"/>
</dbReference>
<dbReference type="SUPFAM" id="SSF57701">
    <property type="entry name" value="Zn2/Cys6 DNA-binding domain"/>
    <property type="match status" value="1"/>
</dbReference>
<dbReference type="PROSITE" id="PS00463">
    <property type="entry name" value="ZN2_CY6_FUNGAL_1"/>
    <property type="match status" value="1"/>
</dbReference>
<dbReference type="PROSITE" id="PS50048">
    <property type="entry name" value="ZN2_CY6_FUNGAL_2"/>
    <property type="match status" value="1"/>
</dbReference>
<protein>
    <recommendedName>
        <fullName evidence="7">Transcription factor eupR</fullName>
    </recommendedName>
    <alternativeName>
        <fullName evidence="7">Eupenifeldin biosynthesis cluster protein RT</fullName>
    </alternativeName>
</protein>
<accession>A0A4P8GG91</accession>
<reference key="1">
    <citation type="journal article" date="2019" name="Fungal Genet. Biol.">
        <title>Identification of the gene cluster for bistropolone-humulene meroterpenoid biosynthesis in Phoma sp.</title>
        <authorList>
            <person name="Zhai Y."/>
            <person name="Li Y."/>
            <person name="Zhang J."/>
            <person name="Zhang Y."/>
            <person name="Ren F."/>
            <person name="Zhang X."/>
            <person name="Liu G."/>
            <person name="Liu X."/>
            <person name="Che Y."/>
        </authorList>
    </citation>
    <scope>NUCLEOTIDE SEQUENCE [GENOMIC DNA]</scope>
    <scope>FUNCTION</scope>
    <scope>DISRUPTION PHENOTYPE</scope>
    <scope>PATHWAY</scope>
    <source>
        <strain>XZ068 / CGMCC No. 10481</strain>
    </source>
</reference>
<reference key="2">
    <citation type="journal article" date="1993" name="J. Antibiot.">
        <title>Eupenifeldin, a novel cytotoxic bistropolone from Eupenicillium brefeldianum.</title>
        <authorList>
            <person name="Mayerl F."/>
            <person name="Gao Q."/>
            <person name="Huang S."/>
            <person name="Klohr S.E."/>
            <person name="Matson J.A."/>
            <person name="Gustavson D.R."/>
            <person name="Pirnik D.M."/>
            <person name="Berry R.L."/>
            <person name="Fairchild C."/>
            <person name="Rose W.C."/>
        </authorList>
    </citation>
    <scope>BIOTECHNOLOGY</scope>
</reference>
<reference key="3">
    <citation type="journal article" date="2008" name="J. Nat. Prod.">
        <title>Noreupenifeldin, a tropolone from an unidentified ascomycete.</title>
        <authorList>
            <person name="Ayers S."/>
            <person name="Zink D.L."/>
            <person name="Powell J.S."/>
            <person name="Brown C.M."/>
            <person name="Grund A."/>
            <person name="Bills G.F."/>
            <person name="Platas G."/>
            <person name="Thompson D."/>
            <person name="Singh S.B."/>
        </authorList>
    </citation>
    <scope>BIOTECHNOLOGY</scope>
</reference>
<reference key="4">
    <citation type="journal article" date="2008" name="Phytochem. Lett.">
        <title>Ramiferin, a bisphenol-sesquiterpene from the fungus Kionochaeta ramifera BCC 7585.</title>
        <authorList>
            <person name="Bunyapaiboonsri T."/>
            <person name="Veeranondha S."/>
            <person name="Boonruangprapa T."/>
            <person name="Somrithipol S."/>
        </authorList>
    </citation>
    <scope>BIOTECHNOLOGY</scope>
</reference>
<feature type="chain" id="PRO_0000449158" description="Transcription factor eupR">
    <location>
        <begin position="1"/>
        <end position="466"/>
    </location>
</feature>
<feature type="DNA-binding region" description="Zn(2)-C6 fungal-type" evidence="1">
    <location>
        <begin position="32"/>
        <end position="62"/>
    </location>
</feature>
<feature type="region of interest" description="Disordered" evidence="2">
    <location>
        <begin position="1"/>
        <end position="22"/>
    </location>
</feature>
<feature type="compositionally biased region" description="Polar residues" evidence="2">
    <location>
        <begin position="1"/>
        <end position="18"/>
    </location>
</feature>
<sequence length="466" mass="51867">MFSTEPRSDTAPGSPSCSETKRRKVRRGTHSCWECKRRKVKCSYSNPSDPRCIGCRRRGTKCLSQQDVDEGASVVSAAVDEDRRIGDRMVRVEALIEQLANQVVNRESEKVVGTNDSESDLATSCSPQDTQTLKHLLPQKVNSPSTCIEYAPVSAALHAALPPHEDINLIIKAGLDVSLHRLMTTSLATLSRCIDGFRAGLAEIPSVDTHPTLLARYLLILATCLQAAHPELHAKEIRCLSEPPRLAMRRLVNAATDLVTSKDELLSSVEGLECVMLESLYLANDGNLRRAWLVCRRAMAVAQLLGLHRVDSQQLPCLTFLSQSVDPRFLWFRIVCTDRQLCLMLGLPQGTPDVSMATESALANDSASGRFERKQCVIASRILERNEASGDFTNDDLATVLKLDEELQQAANEMPSSWWLVPNLASSLHDQNKTIWEMLRLIEQMLYFNLLNLLHLPCMLRARQPA</sequence>
<organism>
    <name type="scientific">Phoma sp</name>
    <dbReference type="NCBI Taxonomy" id="1707701"/>
    <lineage>
        <taxon>Eukaryota</taxon>
        <taxon>Fungi</taxon>
        <taxon>Dikarya</taxon>
        <taxon>Ascomycota</taxon>
        <taxon>Pezizomycotina</taxon>
        <taxon>Dothideomycetes</taxon>
        <taxon>Pleosporomycetidae</taxon>
        <taxon>Pleosporales</taxon>
        <taxon>Pleosporineae</taxon>
        <taxon>Didymellaceae</taxon>
        <taxon>Phoma</taxon>
    </lineage>
</organism>
<evidence type="ECO:0000255" key="1">
    <source>
        <dbReference type="PROSITE-ProRule" id="PRU00227"/>
    </source>
</evidence>
<evidence type="ECO:0000256" key="2">
    <source>
        <dbReference type="SAM" id="MobiDB-lite"/>
    </source>
</evidence>
<evidence type="ECO:0000269" key="3">
    <source>
    </source>
</evidence>
<evidence type="ECO:0000269" key="4">
    <source>
    </source>
</evidence>
<evidence type="ECO:0000269" key="5">
    <source>
    </source>
</evidence>
<evidence type="ECO:0000269" key="6">
    <source ref="4"/>
</evidence>
<evidence type="ECO:0000303" key="7">
    <source>
    </source>
</evidence>
<evidence type="ECO:0000305" key="8"/>
<evidence type="ECO:0000305" key="9">
    <source>
    </source>
</evidence>
<proteinExistence type="evidence at protein level"/>
<gene>
    <name evidence="7" type="primary">eupR</name>
    <name type="ORF">gme12635</name>
</gene>
<keyword id="KW-0238">DNA-binding</keyword>
<keyword id="KW-0479">Metal-binding</keyword>
<keyword id="KW-0539">Nucleus</keyword>
<keyword id="KW-0804">Transcription</keyword>
<keyword id="KW-0805">Transcription regulation</keyword>
<keyword id="KW-0862">Zinc</keyword>